<comment type="function">
    <text evidence="1">Involved in chemotaxis. Part of a chemotaxis signal transduction system that modulates chemotaxis in response to various stimuli. Catalyzes the demethylation of specific methylglutamate residues introduced into the chemoreceptors (methyl-accepting chemotaxis proteins or MCP) by CheR. Also mediates the irreversible deamidation of specific glutamine residues to glutamic acid.</text>
</comment>
<comment type="catalytic activity">
    <reaction evidence="1">
        <text>[protein]-L-glutamate 5-O-methyl ester + H2O = L-glutamyl-[protein] + methanol + H(+)</text>
        <dbReference type="Rhea" id="RHEA:23236"/>
        <dbReference type="Rhea" id="RHEA-COMP:10208"/>
        <dbReference type="Rhea" id="RHEA-COMP:10311"/>
        <dbReference type="ChEBI" id="CHEBI:15377"/>
        <dbReference type="ChEBI" id="CHEBI:15378"/>
        <dbReference type="ChEBI" id="CHEBI:17790"/>
        <dbReference type="ChEBI" id="CHEBI:29973"/>
        <dbReference type="ChEBI" id="CHEBI:82795"/>
        <dbReference type="EC" id="3.1.1.61"/>
    </reaction>
</comment>
<comment type="catalytic activity">
    <reaction evidence="1">
        <text>L-glutaminyl-[protein] + H2O = L-glutamyl-[protein] + NH4(+)</text>
        <dbReference type="Rhea" id="RHEA:16441"/>
        <dbReference type="Rhea" id="RHEA-COMP:10207"/>
        <dbReference type="Rhea" id="RHEA-COMP:10208"/>
        <dbReference type="ChEBI" id="CHEBI:15377"/>
        <dbReference type="ChEBI" id="CHEBI:28938"/>
        <dbReference type="ChEBI" id="CHEBI:29973"/>
        <dbReference type="ChEBI" id="CHEBI:30011"/>
        <dbReference type="EC" id="3.5.1.44"/>
    </reaction>
</comment>
<comment type="subcellular location">
    <subcellularLocation>
        <location evidence="1">Cytoplasm</location>
    </subcellularLocation>
</comment>
<comment type="domain">
    <text evidence="1">Contains a C-terminal catalytic domain, and an N-terminal region which modulates catalytic activity.</text>
</comment>
<comment type="PTM">
    <text evidence="1">Phosphorylated by CheA. Phosphorylation of the N-terminal regulatory domain activates the methylesterase activity.</text>
</comment>
<comment type="similarity">
    <text evidence="1">Belongs to the CheB family.</text>
</comment>
<keyword id="KW-0145">Chemotaxis</keyword>
<keyword id="KW-0963">Cytoplasm</keyword>
<keyword id="KW-0378">Hydrolase</keyword>
<keyword id="KW-0597">Phosphoprotein</keyword>
<gene>
    <name evidence="1" type="primary">cheB</name>
    <name type="ordered locus">CPS_1523</name>
</gene>
<proteinExistence type="inferred from homology"/>
<name>CHEB_COLP3</name>
<evidence type="ECO:0000255" key="1">
    <source>
        <dbReference type="HAMAP-Rule" id="MF_00099"/>
    </source>
</evidence>
<sequence length="379" mass="40593">MAYKVLVVDDSSFFRRRVTDILNKDPKLNVIDVAVNGQEAVDKALLLKPDVITMDIEMPILNGIEAVRKIMAQSPTSILMFSSLTHQGAKATLEALDAGALDFLPKKFSEIAKNSDEAGSLLRQRVVEIARKSEFSKQRTRTRPAAVNISPKSSRLIADQHRPLASTSSLVTKDKKVMAAITRSSGKEYKLLAIGTSTGGPVALQKILVQLEENFPLPIIIVQHMPAAFTAAFASRLNSLCKISIKEAADGDVLKPGCAYLAPGGRQMLISGSENSAKIKILDDDSPKITFKPSVDISFGSAAKTFAGKVLGVILTGMGSDGKEGARMLKAKGATIWSQDEQSCVVYGMPQAIDKAGISELSLSLDSMAASMVKEISRG</sequence>
<protein>
    <recommendedName>
        <fullName evidence="1">Protein-glutamate methylesterase/protein-glutamine glutaminase</fullName>
        <ecNumber evidence="1">3.1.1.61</ecNumber>
        <ecNumber evidence="1">3.5.1.44</ecNumber>
    </recommendedName>
</protein>
<dbReference type="EC" id="3.1.1.61" evidence="1"/>
<dbReference type="EC" id="3.5.1.44" evidence="1"/>
<dbReference type="EMBL" id="CP000083">
    <property type="protein sequence ID" value="AAZ25939.1"/>
    <property type="molecule type" value="Genomic_DNA"/>
</dbReference>
<dbReference type="RefSeq" id="WP_011042359.1">
    <property type="nucleotide sequence ID" value="NC_003910.7"/>
</dbReference>
<dbReference type="SMR" id="Q485K0"/>
<dbReference type="STRING" id="167879.CPS_1523"/>
<dbReference type="KEGG" id="cps:CPS_1523"/>
<dbReference type="HOGENOM" id="CLU_000445_51_0_6"/>
<dbReference type="Proteomes" id="UP000000547">
    <property type="component" value="Chromosome"/>
</dbReference>
<dbReference type="GO" id="GO:0005737">
    <property type="term" value="C:cytoplasm"/>
    <property type="evidence" value="ECO:0007669"/>
    <property type="project" value="UniProtKB-SubCell"/>
</dbReference>
<dbReference type="GO" id="GO:0000156">
    <property type="term" value="F:phosphorelay response regulator activity"/>
    <property type="evidence" value="ECO:0007669"/>
    <property type="project" value="InterPro"/>
</dbReference>
<dbReference type="GO" id="GO:0008984">
    <property type="term" value="F:protein-glutamate methylesterase activity"/>
    <property type="evidence" value="ECO:0007669"/>
    <property type="project" value="UniProtKB-UniRule"/>
</dbReference>
<dbReference type="GO" id="GO:0050568">
    <property type="term" value="F:protein-glutamine glutaminase activity"/>
    <property type="evidence" value="ECO:0007669"/>
    <property type="project" value="UniProtKB-UniRule"/>
</dbReference>
<dbReference type="GO" id="GO:0006935">
    <property type="term" value="P:chemotaxis"/>
    <property type="evidence" value="ECO:0007669"/>
    <property type="project" value="UniProtKB-UniRule"/>
</dbReference>
<dbReference type="CDD" id="cd16432">
    <property type="entry name" value="CheB_Rec"/>
    <property type="match status" value="1"/>
</dbReference>
<dbReference type="CDD" id="cd17541">
    <property type="entry name" value="REC_CheB-like"/>
    <property type="match status" value="1"/>
</dbReference>
<dbReference type="Gene3D" id="3.40.50.2300">
    <property type="match status" value="1"/>
</dbReference>
<dbReference type="Gene3D" id="3.40.50.180">
    <property type="entry name" value="Methylesterase CheB, C-terminal domain"/>
    <property type="match status" value="1"/>
</dbReference>
<dbReference type="HAMAP" id="MF_00099">
    <property type="entry name" value="CheB_chemtxs"/>
    <property type="match status" value="1"/>
</dbReference>
<dbReference type="InterPro" id="IPR008248">
    <property type="entry name" value="CheB-like"/>
</dbReference>
<dbReference type="InterPro" id="IPR035909">
    <property type="entry name" value="CheB_C"/>
</dbReference>
<dbReference type="InterPro" id="IPR011006">
    <property type="entry name" value="CheY-like_superfamily"/>
</dbReference>
<dbReference type="InterPro" id="IPR000673">
    <property type="entry name" value="Sig_transdc_resp-reg_Me-estase"/>
</dbReference>
<dbReference type="InterPro" id="IPR001789">
    <property type="entry name" value="Sig_transdc_resp-reg_receiver"/>
</dbReference>
<dbReference type="NCBIfam" id="NF001965">
    <property type="entry name" value="PRK00742.1"/>
    <property type="match status" value="1"/>
</dbReference>
<dbReference type="PANTHER" id="PTHR42872">
    <property type="entry name" value="PROTEIN-GLUTAMATE METHYLESTERASE/PROTEIN-GLUTAMINE GLUTAMINASE"/>
    <property type="match status" value="1"/>
</dbReference>
<dbReference type="PANTHER" id="PTHR42872:SF3">
    <property type="entry name" value="PROTEIN-GLUTAMATE METHYLESTERASE_PROTEIN-GLUTAMINE GLUTAMINASE 1"/>
    <property type="match status" value="1"/>
</dbReference>
<dbReference type="Pfam" id="PF01339">
    <property type="entry name" value="CheB_methylest"/>
    <property type="match status" value="1"/>
</dbReference>
<dbReference type="Pfam" id="PF00072">
    <property type="entry name" value="Response_reg"/>
    <property type="match status" value="1"/>
</dbReference>
<dbReference type="PIRSF" id="PIRSF000876">
    <property type="entry name" value="RR_chemtxs_CheB"/>
    <property type="match status" value="1"/>
</dbReference>
<dbReference type="SMART" id="SM00448">
    <property type="entry name" value="REC"/>
    <property type="match status" value="1"/>
</dbReference>
<dbReference type="SUPFAM" id="SSF52172">
    <property type="entry name" value="CheY-like"/>
    <property type="match status" value="1"/>
</dbReference>
<dbReference type="SUPFAM" id="SSF52738">
    <property type="entry name" value="Methylesterase CheB, C-terminal domain"/>
    <property type="match status" value="1"/>
</dbReference>
<dbReference type="PROSITE" id="PS50122">
    <property type="entry name" value="CHEB"/>
    <property type="match status" value="1"/>
</dbReference>
<dbReference type="PROSITE" id="PS50110">
    <property type="entry name" value="RESPONSE_REGULATORY"/>
    <property type="match status" value="1"/>
</dbReference>
<reference key="1">
    <citation type="journal article" date="2005" name="Proc. Natl. Acad. Sci. U.S.A.">
        <title>The psychrophilic lifestyle as revealed by the genome sequence of Colwellia psychrerythraea 34H through genomic and proteomic analyses.</title>
        <authorList>
            <person name="Methe B.A."/>
            <person name="Nelson K.E."/>
            <person name="Deming J.W."/>
            <person name="Momen B."/>
            <person name="Melamud E."/>
            <person name="Zhang X."/>
            <person name="Moult J."/>
            <person name="Madupu R."/>
            <person name="Nelson W.C."/>
            <person name="Dodson R.J."/>
            <person name="Brinkac L.M."/>
            <person name="Daugherty S.C."/>
            <person name="Durkin A.S."/>
            <person name="DeBoy R.T."/>
            <person name="Kolonay J.F."/>
            <person name="Sullivan S.A."/>
            <person name="Zhou L."/>
            <person name="Davidsen T.M."/>
            <person name="Wu M."/>
            <person name="Huston A.L."/>
            <person name="Lewis M."/>
            <person name="Weaver B."/>
            <person name="Weidman J.F."/>
            <person name="Khouri H."/>
            <person name="Utterback T.R."/>
            <person name="Feldblyum T.V."/>
            <person name="Fraser C.M."/>
        </authorList>
    </citation>
    <scope>NUCLEOTIDE SEQUENCE [LARGE SCALE GENOMIC DNA]</scope>
    <source>
        <strain>34H / ATCC BAA-681</strain>
    </source>
</reference>
<feature type="chain" id="PRO_0000225454" description="Protein-glutamate methylesterase/protein-glutamine glutaminase">
    <location>
        <begin position="1"/>
        <end position="379"/>
    </location>
</feature>
<feature type="domain" description="Response regulatory" evidence="1">
    <location>
        <begin position="4"/>
        <end position="121"/>
    </location>
</feature>
<feature type="domain" description="CheB-type methylesterase" evidence="1">
    <location>
        <begin position="185"/>
        <end position="379"/>
    </location>
</feature>
<feature type="active site" evidence="1">
    <location>
        <position position="197"/>
    </location>
</feature>
<feature type="active site" evidence="1">
    <location>
        <position position="224"/>
    </location>
</feature>
<feature type="active site" evidence="1">
    <location>
        <position position="321"/>
    </location>
</feature>
<feature type="modified residue" description="4-aspartylphosphate" evidence="1">
    <location>
        <position position="55"/>
    </location>
</feature>
<accession>Q485K0</accession>
<organism>
    <name type="scientific">Colwellia psychrerythraea (strain 34H / ATCC BAA-681)</name>
    <name type="common">Vibrio psychroerythus</name>
    <dbReference type="NCBI Taxonomy" id="167879"/>
    <lineage>
        <taxon>Bacteria</taxon>
        <taxon>Pseudomonadati</taxon>
        <taxon>Pseudomonadota</taxon>
        <taxon>Gammaproteobacteria</taxon>
        <taxon>Alteromonadales</taxon>
        <taxon>Colwelliaceae</taxon>
        <taxon>Colwellia</taxon>
    </lineage>
</organism>